<evidence type="ECO:0000255" key="1">
    <source>
        <dbReference type="HAMAP-Rule" id="MF_00352"/>
    </source>
</evidence>
<protein>
    <recommendedName>
        <fullName evidence="1">Light-independent protochlorophyllide reductase subunit N</fullName>
        <shortName evidence="1">DPOR subunit N</shortName>
        <shortName evidence="1">LI-POR subunit N</shortName>
        <ecNumber evidence="1">1.3.7.7</ecNumber>
    </recommendedName>
</protein>
<accession>Q2JS72</accession>
<name>CHLN_SYNJA</name>
<organism>
    <name type="scientific">Synechococcus sp. (strain JA-3-3Ab)</name>
    <name type="common">Cyanobacteria bacterium Yellowstone A-Prime</name>
    <dbReference type="NCBI Taxonomy" id="321327"/>
    <lineage>
        <taxon>Bacteria</taxon>
        <taxon>Bacillati</taxon>
        <taxon>Cyanobacteriota</taxon>
        <taxon>Cyanophyceae</taxon>
        <taxon>Synechococcales</taxon>
        <taxon>Synechococcaceae</taxon>
        <taxon>Synechococcus</taxon>
    </lineage>
</organism>
<gene>
    <name evidence="1" type="primary">chlN</name>
    <name type="ordered locus">CYA_2385</name>
</gene>
<sequence length="466" mass="52058">MTAAVDTSNTLHFQCETGNYHTFCPISCVAWLYPKIEDSFFLVIGTKTCGYFLQNAMGVMIFAEPRYAMAELEEGDISAKLNDYEELKRLCLQIQRDRNPSVIVWIGTCTTEIIKMDLEGLAQKLEAEIGIPIVVARANGLDYAFTQGEDTVLASMAQRCPEQVQEEERETRGGLQALFYGLRSGKKKEEEGFHPHPPLVIFGSVPDPVVTQLTLELKKYGIRVSGWLPAKRYGELPAIEPGTHVVGVNPFLSRTATTLVRRKKAKLIPAPFPIGPDGTRAWIEAIARELGIPTPGLAEREAEVWRHPQVQEYLGLLRGKSVFFMGDNLLEVSLARFLVRCGMTVQEIGIPYLDKRYQAAELALLERTCEEMGVPKPTLVEKPDNYHQLQRIKALQPDLVITGMAHANPLEARGITTKWSVEFTFAPIHGFGNTQALLELVTRPLRRNAALKGLGWEQLVREEASV</sequence>
<feature type="chain" id="PRO_0000324030" description="Light-independent protochlorophyllide reductase subunit N">
    <location>
        <begin position="1"/>
        <end position="466"/>
    </location>
</feature>
<feature type="binding site" evidence="1">
    <location>
        <position position="24"/>
    </location>
    <ligand>
        <name>[4Fe-4S] cluster</name>
        <dbReference type="ChEBI" id="CHEBI:49883"/>
        <note>ligand shared with heterodimeric partner</note>
    </ligand>
</feature>
<feature type="binding site" evidence="1">
    <location>
        <position position="49"/>
    </location>
    <ligand>
        <name>[4Fe-4S] cluster</name>
        <dbReference type="ChEBI" id="CHEBI:49883"/>
        <note>ligand shared with heterodimeric partner</note>
    </ligand>
</feature>
<feature type="binding site" evidence="1">
    <location>
        <position position="109"/>
    </location>
    <ligand>
        <name>[4Fe-4S] cluster</name>
        <dbReference type="ChEBI" id="CHEBI:49883"/>
        <note>ligand shared with heterodimeric partner</note>
    </ligand>
</feature>
<dbReference type="EC" id="1.3.7.7" evidence="1"/>
<dbReference type="EMBL" id="CP000239">
    <property type="protein sequence ID" value="ABD00510.1"/>
    <property type="molecule type" value="Genomic_DNA"/>
</dbReference>
<dbReference type="RefSeq" id="WP_011431183.1">
    <property type="nucleotide sequence ID" value="NC_007775.1"/>
</dbReference>
<dbReference type="SMR" id="Q2JS72"/>
<dbReference type="STRING" id="321327.CYA_2385"/>
<dbReference type="KEGG" id="cya:CYA_2385"/>
<dbReference type="eggNOG" id="COG2710">
    <property type="taxonomic scope" value="Bacteria"/>
</dbReference>
<dbReference type="HOGENOM" id="CLU_037170_0_0_3"/>
<dbReference type="OrthoDB" id="5714774at2"/>
<dbReference type="UniPathway" id="UPA00670"/>
<dbReference type="Proteomes" id="UP000008818">
    <property type="component" value="Chromosome"/>
</dbReference>
<dbReference type="GO" id="GO:0051539">
    <property type="term" value="F:4 iron, 4 sulfur cluster binding"/>
    <property type="evidence" value="ECO:0007669"/>
    <property type="project" value="UniProtKB-UniRule"/>
</dbReference>
<dbReference type="GO" id="GO:0005524">
    <property type="term" value="F:ATP binding"/>
    <property type="evidence" value="ECO:0007669"/>
    <property type="project" value="UniProtKB-UniRule"/>
</dbReference>
<dbReference type="GO" id="GO:0046872">
    <property type="term" value="F:metal ion binding"/>
    <property type="evidence" value="ECO:0007669"/>
    <property type="project" value="UniProtKB-KW"/>
</dbReference>
<dbReference type="GO" id="GO:0016730">
    <property type="term" value="F:oxidoreductase activity, acting on iron-sulfur proteins as donors"/>
    <property type="evidence" value="ECO:0007669"/>
    <property type="project" value="InterPro"/>
</dbReference>
<dbReference type="GO" id="GO:0016636">
    <property type="term" value="F:oxidoreductase activity, acting on the CH-CH group of donors, iron-sulfur protein as acceptor"/>
    <property type="evidence" value="ECO:0007669"/>
    <property type="project" value="UniProtKB-UniRule"/>
</dbReference>
<dbReference type="GO" id="GO:0036068">
    <property type="term" value="P:light-independent chlorophyll biosynthetic process"/>
    <property type="evidence" value="ECO:0007669"/>
    <property type="project" value="UniProtKB-UniRule"/>
</dbReference>
<dbReference type="GO" id="GO:0019685">
    <property type="term" value="P:photosynthesis, dark reaction"/>
    <property type="evidence" value="ECO:0007669"/>
    <property type="project" value="InterPro"/>
</dbReference>
<dbReference type="CDD" id="cd01979">
    <property type="entry name" value="Pchlide_reductase_N"/>
    <property type="match status" value="1"/>
</dbReference>
<dbReference type="Gene3D" id="3.40.50.1980">
    <property type="entry name" value="Nitrogenase molybdenum iron protein domain"/>
    <property type="match status" value="3"/>
</dbReference>
<dbReference type="HAMAP" id="MF_00352">
    <property type="entry name" value="ChlN_BchN"/>
    <property type="match status" value="1"/>
</dbReference>
<dbReference type="InterPro" id="IPR050293">
    <property type="entry name" value="LIPOR_BchN/ChlN"/>
</dbReference>
<dbReference type="InterPro" id="IPR000510">
    <property type="entry name" value="Nase/OxRdtase_comp1"/>
</dbReference>
<dbReference type="InterPro" id="IPR005970">
    <property type="entry name" value="Protochl_reductN"/>
</dbReference>
<dbReference type="NCBIfam" id="TIGR01279">
    <property type="entry name" value="DPOR_bchN"/>
    <property type="match status" value="1"/>
</dbReference>
<dbReference type="NCBIfam" id="NF002768">
    <property type="entry name" value="PRK02842.1"/>
    <property type="match status" value="1"/>
</dbReference>
<dbReference type="PANTHER" id="PTHR39429">
    <property type="entry name" value="LIGHT-INDEPENDENT PROTOCHLOROPHYLLIDE REDUCTASE SUBUNIT N"/>
    <property type="match status" value="1"/>
</dbReference>
<dbReference type="PANTHER" id="PTHR39429:SF3">
    <property type="entry name" value="LIGHT-INDEPENDENT PROTOCHLOROPHYLLIDE REDUCTASE SUBUNIT N"/>
    <property type="match status" value="1"/>
</dbReference>
<dbReference type="Pfam" id="PF00148">
    <property type="entry name" value="Oxidored_nitro"/>
    <property type="match status" value="1"/>
</dbReference>
<dbReference type="PIRSF" id="PIRSF000162">
    <property type="entry name" value="P_chlorophyll_rd"/>
    <property type="match status" value="1"/>
</dbReference>
<dbReference type="SUPFAM" id="SSF53807">
    <property type="entry name" value="Helical backbone' metal receptor"/>
    <property type="match status" value="1"/>
</dbReference>
<keyword id="KW-0004">4Fe-4S</keyword>
<keyword id="KW-0067">ATP-binding</keyword>
<keyword id="KW-0149">Chlorophyll biosynthesis</keyword>
<keyword id="KW-0408">Iron</keyword>
<keyword id="KW-0411">Iron-sulfur</keyword>
<keyword id="KW-0479">Metal-binding</keyword>
<keyword id="KW-0547">Nucleotide-binding</keyword>
<keyword id="KW-0560">Oxidoreductase</keyword>
<keyword id="KW-0602">Photosynthesis</keyword>
<reference key="1">
    <citation type="journal article" date="2007" name="ISME J.">
        <title>Population level functional diversity in a microbial community revealed by comparative genomic and metagenomic analyses.</title>
        <authorList>
            <person name="Bhaya D."/>
            <person name="Grossman A.R."/>
            <person name="Steunou A.-S."/>
            <person name="Khuri N."/>
            <person name="Cohan F.M."/>
            <person name="Hamamura N."/>
            <person name="Melendrez M.C."/>
            <person name="Bateson M.M."/>
            <person name="Ward D.M."/>
            <person name="Heidelberg J.F."/>
        </authorList>
    </citation>
    <scope>NUCLEOTIDE SEQUENCE [LARGE SCALE GENOMIC DNA]</scope>
    <source>
        <strain>JA-3-3Ab</strain>
    </source>
</reference>
<proteinExistence type="inferred from homology"/>
<comment type="function">
    <text evidence="1">Component of the dark-operative protochlorophyllide reductase (DPOR) that uses Mg-ATP and reduced ferredoxin to reduce ring D of protochlorophyllide (Pchlide) to form chlorophyllide a (Chlide). This reaction is light-independent. The NB-protein (ChlN-ChlB) is the catalytic component of the complex.</text>
</comment>
<comment type="catalytic activity">
    <reaction evidence="1">
        <text>chlorophyllide a + oxidized 2[4Fe-4S]-[ferredoxin] + 2 ADP + 2 phosphate = protochlorophyllide a + reduced 2[4Fe-4S]-[ferredoxin] + 2 ATP + 2 H2O</text>
        <dbReference type="Rhea" id="RHEA:28202"/>
        <dbReference type="Rhea" id="RHEA-COMP:10002"/>
        <dbReference type="Rhea" id="RHEA-COMP:10004"/>
        <dbReference type="ChEBI" id="CHEBI:15377"/>
        <dbReference type="ChEBI" id="CHEBI:30616"/>
        <dbReference type="ChEBI" id="CHEBI:33722"/>
        <dbReference type="ChEBI" id="CHEBI:33723"/>
        <dbReference type="ChEBI" id="CHEBI:43474"/>
        <dbReference type="ChEBI" id="CHEBI:83348"/>
        <dbReference type="ChEBI" id="CHEBI:83350"/>
        <dbReference type="ChEBI" id="CHEBI:456216"/>
        <dbReference type="EC" id="1.3.7.7"/>
    </reaction>
</comment>
<comment type="cofactor">
    <cofactor evidence="1">
        <name>[4Fe-4S] cluster</name>
        <dbReference type="ChEBI" id="CHEBI:49883"/>
    </cofactor>
    <text evidence="1">Binds 1 [4Fe-4S] cluster per heterodimer. The cluster is bound at the heterodimer interface by residues from both subunits.</text>
</comment>
<comment type="pathway">
    <text evidence="1">Porphyrin-containing compound metabolism; chlorophyll biosynthesis (light-independent).</text>
</comment>
<comment type="subunit">
    <text evidence="1">Protochlorophyllide reductase is composed of three subunits; ChlL, ChlN and ChlB. Forms a heterotetramer of two ChlB and two ChlN subunits.</text>
</comment>
<comment type="similarity">
    <text evidence="1">Belongs to the BchN/ChlN family.</text>
</comment>